<organism>
    <name type="scientific">Staphylococcus aureus (strain MRSA252)</name>
    <dbReference type="NCBI Taxonomy" id="282458"/>
    <lineage>
        <taxon>Bacteria</taxon>
        <taxon>Bacillati</taxon>
        <taxon>Bacillota</taxon>
        <taxon>Bacilli</taxon>
        <taxon>Bacillales</taxon>
        <taxon>Staphylococcaceae</taxon>
        <taxon>Staphylococcus</taxon>
    </lineage>
</organism>
<name>MNHF1_STAAR</name>
<accession>Q6GIE1</accession>
<protein>
    <recommendedName>
        <fullName>Na(+)/H(+) antiporter subunit F1</fullName>
    </recommendedName>
    <alternativeName>
        <fullName>Mnh complex subunit F1</fullName>
    </alternativeName>
</protein>
<gene>
    <name type="primary">mnhF1</name>
    <name type="ordered locus">SAR0909</name>
</gene>
<feature type="chain" id="PRO_0000087738" description="Na(+)/H(+) antiporter subunit F1">
    <location>
        <begin position="1"/>
        <end position="97"/>
    </location>
</feature>
<feature type="transmembrane region" description="Helical" evidence="2">
    <location>
        <begin position="5"/>
        <end position="27"/>
    </location>
</feature>
<feature type="transmembrane region" description="Helical" evidence="2">
    <location>
        <begin position="34"/>
        <end position="56"/>
    </location>
</feature>
<feature type="transmembrane region" description="Helical" evidence="2">
    <location>
        <begin position="60"/>
        <end position="82"/>
    </location>
</feature>
<keyword id="KW-0050">Antiport</keyword>
<keyword id="KW-1003">Cell membrane</keyword>
<keyword id="KW-0375">Hydrogen ion transport</keyword>
<keyword id="KW-0406">Ion transport</keyword>
<keyword id="KW-0472">Membrane</keyword>
<keyword id="KW-0915">Sodium</keyword>
<keyword id="KW-0739">Sodium transport</keyword>
<keyword id="KW-0812">Transmembrane</keyword>
<keyword id="KW-1133">Transmembrane helix</keyword>
<keyword id="KW-0813">Transport</keyword>
<comment type="function">
    <text evidence="1">Mnh complex is a Na(+)/H(+) antiporter involved in Na(+) excretion.</text>
</comment>
<comment type="subunit">
    <text evidence="1">May form a heterooligomeric complex that consists of seven subunits: mnhA1, mnhB1, mnhC1, mnhD1, mnhE1, mnhF1 and mnhG1.</text>
</comment>
<comment type="subcellular location">
    <subcellularLocation>
        <location evidence="3">Cell membrane</location>
        <topology evidence="3">Multi-pass membrane protein</topology>
    </subcellularLocation>
</comment>
<comment type="similarity">
    <text evidence="3">Belongs to the CPA3 antiporters (TC 2.A.63) subunit F family.</text>
</comment>
<reference key="1">
    <citation type="journal article" date="2004" name="Proc. Natl. Acad. Sci. U.S.A.">
        <title>Complete genomes of two clinical Staphylococcus aureus strains: evidence for the rapid evolution of virulence and drug resistance.</title>
        <authorList>
            <person name="Holden M.T.G."/>
            <person name="Feil E.J."/>
            <person name="Lindsay J.A."/>
            <person name="Peacock S.J."/>
            <person name="Day N.P.J."/>
            <person name="Enright M.C."/>
            <person name="Foster T.J."/>
            <person name="Moore C.E."/>
            <person name="Hurst L."/>
            <person name="Atkin R."/>
            <person name="Barron A."/>
            <person name="Bason N."/>
            <person name="Bentley S.D."/>
            <person name="Chillingworth C."/>
            <person name="Chillingworth T."/>
            <person name="Churcher C."/>
            <person name="Clark L."/>
            <person name="Corton C."/>
            <person name="Cronin A."/>
            <person name="Doggett J."/>
            <person name="Dowd L."/>
            <person name="Feltwell T."/>
            <person name="Hance Z."/>
            <person name="Harris B."/>
            <person name="Hauser H."/>
            <person name="Holroyd S."/>
            <person name="Jagels K."/>
            <person name="James K.D."/>
            <person name="Lennard N."/>
            <person name="Line A."/>
            <person name="Mayes R."/>
            <person name="Moule S."/>
            <person name="Mungall K."/>
            <person name="Ormond D."/>
            <person name="Quail M.A."/>
            <person name="Rabbinowitsch E."/>
            <person name="Rutherford K.M."/>
            <person name="Sanders M."/>
            <person name="Sharp S."/>
            <person name="Simmonds M."/>
            <person name="Stevens K."/>
            <person name="Whitehead S."/>
            <person name="Barrell B.G."/>
            <person name="Spratt B.G."/>
            <person name="Parkhill J."/>
        </authorList>
    </citation>
    <scope>NUCLEOTIDE SEQUENCE [LARGE SCALE GENOMIC DNA]</scope>
    <source>
        <strain>MRSA252</strain>
    </source>
</reference>
<dbReference type="EMBL" id="BX571856">
    <property type="protein sequence ID" value="CAG39915.1"/>
    <property type="molecule type" value="Genomic_DNA"/>
</dbReference>
<dbReference type="RefSeq" id="WP_001016306.1">
    <property type="nucleotide sequence ID" value="NC_002952.2"/>
</dbReference>
<dbReference type="SMR" id="Q6GIE1"/>
<dbReference type="KEGG" id="sar:SAR0909"/>
<dbReference type="HOGENOM" id="CLU_125825_1_3_9"/>
<dbReference type="Proteomes" id="UP000000596">
    <property type="component" value="Chromosome"/>
</dbReference>
<dbReference type="GO" id="GO:0005886">
    <property type="term" value="C:plasma membrane"/>
    <property type="evidence" value="ECO:0007669"/>
    <property type="project" value="UniProtKB-SubCell"/>
</dbReference>
<dbReference type="GO" id="GO:0015385">
    <property type="term" value="F:sodium:proton antiporter activity"/>
    <property type="evidence" value="ECO:0007669"/>
    <property type="project" value="TreeGrafter"/>
</dbReference>
<dbReference type="InterPro" id="IPR007208">
    <property type="entry name" value="MrpF/PhaF-like"/>
</dbReference>
<dbReference type="NCBIfam" id="NF009248">
    <property type="entry name" value="PRK12600.1"/>
    <property type="match status" value="1"/>
</dbReference>
<dbReference type="PANTHER" id="PTHR34702">
    <property type="entry name" value="NA(+)/H(+) ANTIPORTER SUBUNIT F1"/>
    <property type="match status" value="1"/>
</dbReference>
<dbReference type="PANTHER" id="PTHR34702:SF1">
    <property type="entry name" value="NA(+)_H(+) ANTIPORTER SUBUNIT F"/>
    <property type="match status" value="1"/>
</dbReference>
<dbReference type="Pfam" id="PF04066">
    <property type="entry name" value="MrpF_PhaF"/>
    <property type="match status" value="1"/>
</dbReference>
<dbReference type="PIRSF" id="PIRSF028784">
    <property type="entry name" value="MrpF"/>
    <property type="match status" value="1"/>
</dbReference>
<sequence length="97" mass="10616">MNHNVIIVIALIIVVISMLAMLIRVVLGPSLADRVVALDAIGLQLMAVIALFSILLNIKYMIVVIMMIGILAFLGTAVFSKFMDKGKVIEHDQNHTD</sequence>
<proteinExistence type="inferred from homology"/>
<evidence type="ECO:0000250" key="1"/>
<evidence type="ECO:0000255" key="2"/>
<evidence type="ECO:0000305" key="3"/>